<keyword id="KW-1185">Reference proteome</keyword>
<dbReference type="EMBL" id="AC025417">
    <property type="protein sequence ID" value="AAF88092.1"/>
    <property type="molecule type" value="Genomic_DNA"/>
</dbReference>
<dbReference type="EMBL" id="CP002684">
    <property type="protein sequence ID" value="AEE28916.1"/>
    <property type="molecule type" value="Genomic_DNA"/>
</dbReference>
<dbReference type="EMBL" id="AK117662">
    <property type="protein sequence ID" value="BAC42315.1"/>
    <property type="molecule type" value="mRNA"/>
</dbReference>
<dbReference type="EMBL" id="BT005109">
    <property type="protein sequence ID" value="AAO50642.1"/>
    <property type="molecule type" value="mRNA"/>
</dbReference>
<dbReference type="SMR" id="Q9LN77"/>
<dbReference type="FunCoup" id="Q9LN77">
    <property type="interactions" value="61"/>
</dbReference>
<dbReference type="STRING" id="3702.Q9LN77"/>
<dbReference type="PaxDb" id="3702-AT1G12710.1"/>
<dbReference type="EnsemblPlants" id="AT1G12710.1">
    <property type="protein sequence ID" value="AT1G12710.1"/>
    <property type="gene ID" value="AT1G12710"/>
</dbReference>
<dbReference type="GeneID" id="837826"/>
<dbReference type="Gramene" id="AT1G12710.1">
    <property type="protein sequence ID" value="AT1G12710.1"/>
    <property type="gene ID" value="AT1G12710"/>
</dbReference>
<dbReference type="KEGG" id="ath:AT1G12710"/>
<dbReference type="Araport" id="AT1G12710"/>
<dbReference type="TAIR" id="AT1G12710">
    <property type="gene designation" value="PP2-A12"/>
</dbReference>
<dbReference type="eggNOG" id="ENOG502QPMH">
    <property type="taxonomic scope" value="Eukaryota"/>
</dbReference>
<dbReference type="HOGENOM" id="CLU_050973_1_0_1"/>
<dbReference type="InParanoid" id="Q9LN77"/>
<dbReference type="OMA" id="ICPSAFR"/>
<dbReference type="PhylomeDB" id="Q9LN77"/>
<dbReference type="PRO" id="PR:Q9LN77"/>
<dbReference type="Proteomes" id="UP000006548">
    <property type="component" value="Chromosome 1"/>
</dbReference>
<dbReference type="ExpressionAtlas" id="Q9LN77">
    <property type="expression patterns" value="baseline and differential"/>
</dbReference>
<dbReference type="GO" id="GO:0030246">
    <property type="term" value="F:carbohydrate binding"/>
    <property type="evidence" value="ECO:0000250"/>
    <property type="project" value="TAIR"/>
</dbReference>
<dbReference type="CDD" id="cd22162">
    <property type="entry name" value="F-box_AtSKIP3-like"/>
    <property type="match status" value="1"/>
</dbReference>
<dbReference type="InterPro" id="IPR036047">
    <property type="entry name" value="F-box-like_dom_sf"/>
</dbReference>
<dbReference type="InterPro" id="IPR001810">
    <property type="entry name" value="F-box_dom"/>
</dbReference>
<dbReference type="InterPro" id="IPR025886">
    <property type="entry name" value="PP2-like"/>
</dbReference>
<dbReference type="PANTHER" id="PTHR31960:SF22">
    <property type="entry name" value="F-BOX PROTEIN PP2-A12"/>
    <property type="match status" value="1"/>
</dbReference>
<dbReference type="PANTHER" id="PTHR31960">
    <property type="entry name" value="F-BOX PROTEIN PP2-A15"/>
    <property type="match status" value="1"/>
</dbReference>
<dbReference type="Pfam" id="PF00646">
    <property type="entry name" value="F-box"/>
    <property type="match status" value="1"/>
</dbReference>
<dbReference type="Pfam" id="PF14299">
    <property type="entry name" value="PP2"/>
    <property type="match status" value="1"/>
</dbReference>
<dbReference type="SMART" id="SM00256">
    <property type="entry name" value="FBOX"/>
    <property type="match status" value="1"/>
</dbReference>
<dbReference type="SUPFAM" id="SSF81383">
    <property type="entry name" value="F-box domain"/>
    <property type="match status" value="1"/>
</dbReference>
<gene>
    <name type="primary">P2A12</name>
    <name type="ordered locus">At1g12710</name>
    <name type="ORF">T12C24.23</name>
</gene>
<protein>
    <recommendedName>
        <fullName>F-box protein PP2-A12</fullName>
    </recommendedName>
    <alternativeName>
        <fullName>Protein PHLOEM PROTEIN 2-LIKE A12</fullName>
        <shortName>AtPP2-A12</shortName>
    </alternativeName>
</protein>
<sequence length="291" mass="33266">MGVAHSDLHNDLSSSSCFGDRNILKPGLGDLPEACVAIIVENLDPVEICRFSKLNRAFRGASWADCVWESKLPQNYRDVLEKILGGFPENLQKRHLYAFLSRINSFDDATKKVWIDKRTSGVCLSISAKGLSITGIDDRRYWSHIPTDESRFSSVAYLQQIWWFEVDGEIDFPFPVGTYSIFFRLQLGRSGKWFGRRVCNTEQVHGWDIKPVRFQLWTEDGQYSSSQCMLTERGNWIHYHAGDVVVRESNRSSTKIKFSMTQIDCTHTKGGLSLDSVVVYPSSCKDQLKRF</sequence>
<name>P2A12_ARATH</name>
<feature type="chain" id="PRO_0000272207" description="F-box protein PP2-A12">
    <location>
        <begin position="1"/>
        <end position="291"/>
    </location>
</feature>
<feature type="domain" description="F-box">
    <location>
        <begin position="25"/>
        <end position="71"/>
    </location>
</feature>
<accession>Q9LN77</accession>
<proteinExistence type="evidence at transcript level"/>
<organism>
    <name type="scientific">Arabidopsis thaliana</name>
    <name type="common">Mouse-ear cress</name>
    <dbReference type="NCBI Taxonomy" id="3702"/>
    <lineage>
        <taxon>Eukaryota</taxon>
        <taxon>Viridiplantae</taxon>
        <taxon>Streptophyta</taxon>
        <taxon>Embryophyta</taxon>
        <taxon>Tracheophyta</taxon>
        <taxon>Spermatophyta</taxon>
        <taxon>Magnoliopsida</taxon>
        <taxon>eudicotyledons</taxon>
        <taxon>Gunneridae</taxon>
        <taxon>Pentapetalae</taxon>
        <taxon>rosids</taxon>
        <taxon>malvids</taxon>
        <taxon>Brassicales</taxon>
        <taxon>Brassicaceae</taxon>
        <taxon>Camelineae</taxon>
        <taxon>Arabidopsis</taxon>
    </lineage>
</organism>
<reference key="1">
    <citation type="journal article" date="2000" name="Nature">
        <title>Sequence and analysis of chromosome 1 of the plant Arabidopsis thaliana.</title>
        <authorList>
            <person name="Theologis A."/>
            <person name="Ecker J.R."/>
            <person name="Palm C.J."/>
            <person name="Federspiel N.A."/>
            <person name="Kaul S."/>
            <person name="White O."/>
            <person name="Alonso J."/>
            <person name="Altafi H."/>
            <person name="Araujo R."/>
            <person name="Bowman C.L."/>
            <person name="Brooks S.Y."/>
            <person name="Buehler E."/>
            <person name="Chan A."/>
            <person name="Chao Q."/>
            <person name="Chen H."/>
            <person name="Cheuk R.F."/>
            <person name="Chin C.W."/>
            <person name="Chung M.K."/>
            <person name="Conn L."/>
            <person name="Conway A.B."/>
            <person name="Conway A.R."/>
            <person name="Creasy T.H."/>
            <person name="Dewar K."/>
            <person name="Dunn P."/>
            <person name="Etgu P."/>
            <person name="Feldblyum T.V."/>
            <person name="Feng J.-D."/>
            <person name="Fong B."/>
            <person name="Fujii C.Y."/>
            <person name="Gill J.E."/>
            <person name="Goldsmith A.D."/>
            <person name="Haas B."/>
            <person name="Hansen N.F."/>
            <person name="Hughes B."/>
            <person name="Huizar L."/>
            <person name="Hunter J.L."/>
            <person name="Jenkins J."/>
            <person name="Johnson-Hopson C."/>
            <person name="Khan S."/>
            <person name="Khaykin E."/>
            <person name="Kim C.J."/>
            <person name="Koo H.L."/>
            <person name="Kremenetskaia I."/>
            <person name="Kurtz D.B."/>
            <person name="Kwan A."/>
            <person name="Lam B."/>
            <person name="Langin-Hooper S."/>
            <person name="Lee A."/>
            <person name="Lee J.M."/>
            <person name="Lenz C.A."/>
            <person name="Li J.H."/>
            <person name="Li Y.-P."/>
            <person name="Lin X."/>
            <person name="Liu S.X."/>
            <person name="Liu Z.A."/>
            <person name="Luros J.S."/>
            <person name="Maiti R."/>
            <person name="Marziali A."/>
            <person name="Militscher J."/>
            <person name="Miranda M."/>
            <person name="Nguyen M."/>
            <person name="Nierman W.C."/>
            <person name="Osborne B.I."/>
            <person name="Pai G."/>
            <person name="Peterson J."/>
            <person name="Pham P.K."/>
            <person name="Rizzo M."/>
            <person name="Rooney T."/>
            <person name="Rowley D."/>
            <person name="Sakano H."/>
            <person name="Salzberg S.L."/>
            <person name="Schwartz J.R."/>
            <person name="Shinn P."/>
            <person name="Southwick A.M."/>
            <person name="Sun H."/>
            <person name="Tallon L.J."/>
            <person name="Tambunga G."/>
            <person name="Toriumi M.J."/>
            <person name="Town C.D."/>
            <person name="Utterback T."/>
            <person name="Van Aken S."/>
            <person name="Vaysberg M."/>
            <person name="Vysotskaia V.S."/>
            <person name="Walker M."/>
            <person name="Wu D."/>
            <person name="Yu G."/>
            <person name="Fraser C.M."/>
            <person name="Venter J.C."/>
            <person name="Davis R.W."/>
        </authorList>
    </citation>
    <scope>NUCLEOTIDE SEQUENCE [LARGE SCALE GENOMIC DNA]</scope>
    <source>
        <strain>cv. Columbia</strain>
    </source>
</reference>
<reference key="2">
    <citation type="journal article" date="2017" name="Plant J.">
        <title>Araport11: a complete reannotation of the Arabidopsis thaliana reference genome.</title>
        <authorList>
            <person name="Cheng C.Y."/>
            <person name="Krishnakumar V."/>
            <person name="Chan A.P."/>
            <person name="Thibaud-Nissen F."/>
            <person name="Schobel S."/>
            <person name="Town C.D."/>
        </authorList>
    </citation>
    <scope>GENOME REANNOTATION</scope>
    <source>
        <strain>cv. Columbia</strain>
    </source>
</reference>
<reference key="3">
    <citation type="journal article" date="2002" name="Science">
        <title>Functional annotation of a full-length Arabidopsis cDNA collection.</title>
        <authorList>
            <person name="Seki M."/>
            <person name="Narusaka M."/>
            <person name="Kamiya A."/>
            <person name="Ishida J."/>
            <person name="Satou M."/>
            <person name="Sakurai T."/>
            <person name="Nakajima M."/>
            <person name="Enju A."/>
            <person name="Akiyama K."/>
            <person name="Oono Y."/>
            <person name="Muramatsu M."/>
            <person name="Hayashizaki Y."/>
            <person name="Kawai J."/>
            <person name="Carninci P."/>
            <person name="Itoh M."/>
            <person name="Ishii Y."/>
            <person name="Arakawa T."/>
            <person name="Shibata K."/>
            <person name="Shinagawa A."/>
            <person name="Shinozaki K."/>
        </authorList>
    </citation>
    <scope>NUCLEOTIDE SEQUENCE [LARGE SCALE MRNA]</scope>
    <source>
        <strain>cv. Columbia</strain>
    </source>
</reference>
<reference key="4">
    <citation type="journal article" date="2003" name="Science">
        <title>Empirical analysis of transcriptional activity in the Arabidopsis genome.</title>
        <authorList>
            <person name="Yamada K."/>
            <person name="Lim J."/>
            <person name="Dale J.M."/>
            <person name="Chen H."/>
            <person name="Shinn P."/>
            <person name="Palm C.J."/>
            <person name="Southwick A.M."/>
            <person name="Wu H.C."/>
            <person name="Kim C.J."/>
            <person name="Nguyen M."/>
            <person name="Pham P.K."/>
            <person name="Cheuk R.F."/>
            <person name="Karlin-Newmann G."/>
            <person name="Liu S.X."/>
            <person name="Lam B."/>
            <person name="Sakano H."/>
            <person name="Wu T."/>
            <person name="Yu G."/>
            <person name="Miranda M."/>
            <person name="Quach H.L."/>
            <person name="Tripp M."/>
            <person name="Chang C.H."/>
            <person name="Lee J.M."/>
            <person name="Toriumi M.J."/>
            <person name="Chan M.M."/>
            <person name="Tang C.C."/>
            <person name="Onodera C.S."/>
            <person name="Deng J.M."/>
            <person name="Akiyama K."/>
            <person name="Ansari Y."/>
            <person name="Arakawa T."/>
            <person name="Banh J."/>
            <person name="Banno F."/>
            <person name="Bowser L."/>
            <person name="Brooks S.Y."/>
            <person name="Carninci P."/>
            <person name="Chao Q."/>
            <person name="Choy N."/>
            <person name="Enju A."/>
            <person name="Goldsmith A.D."/>
            <person name="Gurjal M."/>
            <person name="Hansen N.F."/>
            <person name="Hayashizaki Y."/>
            <person name="Johnson-Hopson C."/>
            <person name="Hsuan V.W."/>
            <person name="Iida K."/>
            <person name="Karnes M."/>
            <person name="Khan S."/>
            <person name="Koesema E."/>
            <person name="Ishida J."/>
            <person name="Jiang P.X."/>
            <person name="Jones T."/>
            <person name="Kawai J."/>
            <person name="Kamiya A."/>
            <person name="Meyers C."/>
            <person name="Nakajima M."/>
            <person name="Narusaka M."/>
            <person name="Seki M."/>
            <person name="Sakurai T."/>
            <person name="Satou M."/>
            <person name="Tamse R."/>
            <person name="Vaysberg M."/>
            <person name="Wallender E.K."/>
            <person name="Wong C."/>
            <person name="Yamamura Y."/>
            <person name="Yuan S."/>
            <person name="Shinozaki K."/>
            <person name="Davis R.W."/>
            <person name="Theologis A."/>
            <person name="Ecker J.R."/>
        </authorList>
    </citation>
    <scope>NUCLEOTIDE SEQUENCE [LARGE SCALE MRNA]</scope>
    <source>
        <strain>cv. Columbia</strain>
    </source>
</reference>
<reference key="5">
    <citation type="journal article" date="2003" name="Plant Physiol.">
        <title>Diversity of the superfamily of phloem lectins (phloem protein 2) in angiosperms.</title>
        <authorList>
            <person name="Dinant S."/>
            <person name="Clark A.M."/>
            <person name="Zhu Y."/>
            <person name="Vilaine F."/>
            <person name="Palauqui J.-C."/>
            <person name="Kusiak C."/>
            <person name="Thompson G.A."/>
        </authorList>
    </citation>
    <scope>GENE FAMILY</scope>
    <scope>NOMENCLATURE</scope>
</reference>